<comment type="function">
    <text evidence="1">Involved in the biosynthesis of a nickel-pincer cofactor ((SCS)Ni(II) pincer complex). Binds Ni(2+), and functions in nickel delivery to pyridinium-3,5-bisthiocarboxylic acid mononucleotide (P2TMN), to form the mature cofactor. Is thus probably required for the activation of nickel-pincer cofactor-dependent enzymes.</text>
</comment>
<comment type="catalytic activity">
    <reaction evidence="1">
        <text>Ni(II)-pyridinium-3,5-bisthiocarboxylate mononucleotide = pyridinium-3,5-bisthiocarboxylate mononucleotide + Ni(2+)</text>
        <dbReference type="Rhea" id="RHEA:54784"/>
        <dbReference type="ChEBI" id="CHEBI:49786"/>
        <dbReference type="ChEBI" id="CHEBI:137372"/>
        <dbReference type="ChEBI" id="CHEBI:137373"/>
        <dbReference type="EC" id="4.99.1.12"/>
    </reaction>
</comment>
<comment type="similarity">
    <text evidence="1">Belongs to the LarC family.</text>
</comment>
<reference key="1">
    <citation type="journal article" date="2011" name="PLoS ONE">
        <title>The genome of Akkermansia muciniphila, a dedicated intestinal mucin degrader, and its use in exploring intestinal metagenomes.</title>
        <authorList>
            <person name="van Passel M.W."/>
            <person name="Kant R."/>
            <person name="Zoetendal E.G."/>
            <person name="Plugge C.M."/>
            <person name="Derrien M."/>
            <person name="Malfatti S.A."/>
            <person name="Chain P.S."/>
            <person name="Woyke T."/>
            <person name="Palva A."/>
            <person name="de Vos W.M."/>
            <person name="Smidt H."/>
        </authorList>
    </citation>
    <scope>NUCLEOTIDE SEQUENCE [LARGE SCALE GENOMIC DNA]</scope>
    <source>
        <strain>ATCC BAA-835 / DSM 22959 / JCM 33894 / BCRC 81048 / CCUG 64013 / CIP 107961 / Muc</strain>
    </source>
</reference>
<sequence length="406" mass="44217">MRALVYDCSAGISGDMNLAALIDLGADRENLERELSKLHVHGEWKLECRPAQQHGIRGTRIDVLTEEEGHSGSSHAHHHRTMADIRKLIETSALSNTVKRTALSIFTLLAEAEARVHGTTSEEVHFHEVGAVDSIIDIAGAAICLEMLRVDTVFTGPVELGSGTVTCQHGTMPVPAPATALLAKHFRATLNGTTHEATTPTGAAYIAALAQPVPSPLAGRITATGYGIGHRQGLPVPNILRVMLVETEEEETSPELLTELCANIDDMTPEQTAYLAEKLMEAGALDTWQESVCMKKGRLAVKVCALCQPEQTDRVREAFFRHSSTPGIRQHGMLRHILRRESAPVHTPHGTVHVKTSFMHGRPHYRKAEFEDCRILAEKTGLPLGQCQLMGLFPTSSHDNDATDSV</sequence>
<protein>
    <recommendedName>
        <fullName evidence="1">Pyridinium-3,5-bisthiocarboxylic acid mononucleotide nickel insertion protein</fullName>
        <shortName evidence="1">P2TMN nickel insertion protein</shortName>
        <ecNumber evidence="1">4.99.1.12</ecNumber>
    </recommendedName>
    <alternativeName>
        <fullName evidence="1">Nickel-pincer cofactor biosynthesis protein LarC</fullName>
    </alternativeName>
</protein>
<accession>B2ULM9</accession>
<gene>
    <name evidence="1" type="primary">larC</name>
    <name type="ordered locus">Amuc_1596</name>
</gene>
<evidence type="ECO:0000255" key="1">
    <source>
        <dbReference type="HAMAP-Rule" id="MF_01074"/>
    </source>
</evidence>
<proteinExistence type="inferred from homology"/>
<keyword id="KW-0456">Lyase</keyword>
<keyword id="KW-0533">Nickel</keyword>
<keyword id="KW-1185">Reference proteome</keyword>
<feature type="chain" id="PRO_1000136685" description="Pyridinium-3,5-bisthiocarboxylic acid mononucleotide nickel insertion protein">
    <location>
        <begin position="1"/>
        <end position="406"/>
    </location>
</feature>
<dbReference type="EC" id="4.99.1.12" evidence="1"/>
<dbReference type="EMBL" id="CP001071">
    <property type="protein sequence ID" value="ACD05416.1"/>
    <property type="molecule type" value="Genomic_DNA"/>
</dbReference>
<dbReference type="SMR" id="B2ULM9"/>
<dbReference type="STRING" id="349741.Amuc_1596"/>
<dbReference type="PaxDb" id="349741-Amuc_1596"/>
<dbReference type="KEGG" id="amu:Amuc_1596"/>
<dbReference type="eggNOG" id="COG1641">
    <property type="taxonomic scope" value="Bacteria"/>
</dbReference>
<dbReference type="HOGENOM" id="CLU_028523_2_1_0"/>
<dbReference type="OrthoDB" id="9765625at2"/>
<dbReference type="Proteomes" id="UP000001031">
    <property type="component" value="Chromosome"/>
</dbReference>
<dbReference type="GO" id="GO:0016829">
    <property type="term" value="F:lyase activity"/>
    <property type="evidence" value="ECO:0007669"/>
    <property type="project" value="UniProtKB-UniRule"/>
</dbReference>
<dbReference type="GO" id="GO:0016151">
    <property type="term" value="F:nickel cation binding"/>
    <property type="evidence" value="ECO:0007669"/>
    <property type="project" value="UniProtKB-UniRule"/>
</dbReference>
<dbReference type="GO" id="GO:0051604">
    <property type="term" value="P:protein maturation"/>
    <property type="evidence" value="ECO:0007669"/>
    <property type="project" value="UniProtKB-UniRule"/>
</dbReference>
<dbReference type="Gene3D" id="3.30.70.1380">
    <property type="entry name" value="Transcriptional regulatory protein pf0864 domain like"/>
    <property type="match status" value="1"/>
</dbReference>
<dbReference type="HAMAP" id="MF_01074">
    <property type="entry name" value="LarC"/>
    <property type="match status" value="1"/>
</dbReference>
<dbReference type="InterPro" id="IPR002822">
    <property type="entry name" value="Ni_insertion"/>
</dbReference>
<dbReference type="NCBIfam" id="TIGR00299">
    <property type="entry name" value="nickel pincer cofactor biosynthesis protein LarC"/>
    <property type="match status" value="1"/>
</dbReference>
<dbReference type="PANTHER" id="PTHR36566">
    <property type="entry name" value="NICKEL INSERTION PROTEIN-RELATED"/>
    <property type="match status" value="1"/>
</dbReference>
<dbReference type="PANTHER" id="PTHR36566:SF1">
    <property type="entry name" value="PYRIDINIUM-3,5-BISTHIOCARBOXYLIC ACID MONONUCLEOTIDE NICKEL INSERTION PROTEIN"/>
    <property type="match status" value="1"/>
</dbReference>
<dbReference type="Pfam" id="PF01969">
    <property type="entry name" value="Ni_insertion"/>
    <property type="match status" value="1"/>
</dbReference>
<organism>
    <name type="scientific">Akkermansia muciniphila (strain ATCC BAA-835 / DSM 22959 / JCM 33894 / BCRC 81048 / CCUG 64013 / CIP 107961 / Muc)</name>
    <dbReference type="NCBI Taxonomy" id="349741"/>
    <lineage>
        <taxon>Bacteria</taxon>
        <taxon>Pseudomonadati</taxon>
        <taxon>Verrucomicrobiota</taxon>
        <taxon>Verrucomicrobiia</taxon>
        <taxon>Verrucomicrobiales</taxon>
        <taxon>Akkermansiaceae</taxon>
        <taxon>Akkermansia</taxon>
    </lineage>
</organism>
<name>LARC_AKKM8</name>